<name>Y058_RHOPB</name>
<evidence type="ECO:0000255" key="1">
    <source>
        <dbReference type="HAMAP-Rule" id="MF_00634"/>
    </source>
</evidence>
<sequence>MTEAWRYSAQGISVALRVTPRGGRDDIDGLETLANGRTVVKVRVRAIAEGGEANRAVTELLAKALGVPKRAVRVLSGTTSRLKQVAVDGDPNELGEALRKLTAPKPD</sequence>
<protein>
    <recommendedName>
        <fullName evidence="1">UPF0235 protein RPC_0058</fullName>
    </recommendedName>
</protein>
<comment type="similarity">
    <text evidence="1">Belongs to the UPF0235 family.</text>
</comment>
<reference key="1">
    <citation type="submission" date="2006-03" db="EMBL/GenBank/DDBJ databases">
        <title>Complete sequence of Rhodopseudomonas palustris BisB18.</title>
        <authorList>
            <consortium name="US DOE Joint Genome Institute"/>
            <person name="Copeland A."/>
            <person name="Lucas S."/>
            <person name="Lapidus A."/>
            <person name="Barry K."/>
            <person name="Detter J.C."/>
            <person name="Glavina del Rio T."/>
            <person name="Hammon N."/>
            <person name="Israni S."/>
            <person name="Dalin E."/>
            <person name="Tice H."/>
            <person name="Pitluck S."/>
            <person name="Chain P."/>
            <person name="Malfatti S."/>
            <person name="Shin M."/>
            <person name="Vergez L."/>
            <person name="Schmutz J."/>
            <person name="Larimer F."/>
            <person name="Land M."/>
            <person name="Hauser L."/>
            <person name="Pelletier D.A."/>
            <person name="Kyrpides N."/>
            <person name="Anderson I."/>
            <person name="Oda Y."/>
            <person name="Harwood C.S."/>
            <person name="Richardson P."/>
        </authorList>
    </citation>
    <scope>NUCLEOTIDE SEQUENCE [LARGE SCALE GENOMIC DNA]</scope>
    <source>
        <strain>BisB18</strain>
    </source>
</reference>
<feature type="chain" id="PRO_1000056782" description="UPF0235 protein RPC_0058">
    <location>
        <begin position="1"/>
        <end position="107"/>
    </location>
</feature>
<accession>Q21D99</accession>
<proteinExistence type="inferred from homology"/>
<gene>
    <name type="ordered locus">RPC_0058</name>
</gene>
<dbReference type="EMBL" id="CP000301">
    <property type="protein sequence ID" value="ABD85637.1"/>
    <property type="molecule type" value="Genomic_DNA"/>
</dbReference>
<dbReference type="STRING" id="316056.RPC_0058"/>
<dbReference type="KEGG" id="rpc:RPC_0058"/>
<dbReference type="eggNOG" id="COG1872">
    <property type="taxonomic scope" value="Bacteria"/>
</dbReference>
<dbReference type="HOGENOM" id="CLU_130694_3_0_5"/>
<dbReference type="OrthoDB" id="9801972at2"/>
<dbReference type="Gene3D" id="3.30.1200.10">
    <property type="entry name" value="YggU-like"/>
    <property type="match status" value="1"/>
</dbReference>
<dbReference type="HAMAP" id="MF_00634">
    <property type="entry name" value="UPF0235"/>
    <property type="match status" value="1"/>
</dbReference>
<dbReference type="InterPro" id="IPR003746">
    <property type="entry name" value="DUF167"/>
</dbReference>
<dbReference type="InterPro" id="IPR036591">
    <property type="entry name" value="YggU-like_sf"/>
</dbReference>
<dbReference type="NCBIfam" id="TIGR00251">
    <property type="entry name" value="DUF167 family protein"/>
    <property type="match status" value="1"/>
</dbReference>
<dbReference type="NCBIfam" id="NF002348">
    <property type="entry name" value="PRK01310.1"/>
    <property type="match status" value="1"/>
</dbReference>
<dbReference type="Pfam" id="PF02594">
    <property type="entry name" value="DUF167"/>
    <property type="match status" value="1"/>
</dbReference>
<dbReference type="SMART" id="SM01152">
    <property type="entry name" value="DUF167"/>
    <property type="match status" value="1"/>
</dbReference>
<dbReference type="SUPFAM" id="SSF69786">
    <property type="entry name" value="YggU-like"/>
    <property type="match status" value="1"/>
</dbReference>
<organism>
    <name type="scientific">Rhodopseudomonas palustris (strain BisB18)</name>
    <dbReference type="NCBI Taxonomy" id="316056"/>
    <lineage>
        <taxon>Bacteria</taxon>
        <taxon>Pseudomonadati</taxon>
        <taxon>Pseudomonadota</taxon>
        <taxon>Alphaproteobacteria</taxon>
        <taxon>Hyphomicrobiales</taxon>
        <taxon>Nitrobacteraceae</taxon>
        <taxon>Rhodopseudomonas</taxon>
    </lineage>
</organism>